<name>MRAY_POLNA</name>
<gene>
    <name evidence="1" type="primary">mraY</name>
    <name type="ordered locus">Pnap_3420</name>
</gene>
<organism>
    <name type="scientific">Polaromonas naphthalenivorans (strain CJ2)</name>
    <dbReference type="NCBI Taxonomy" id="365044"/>
    <lineage>
        <taxon>Bacteria</taxon>
        <taxon>Pseudomonadati</taxon>
        <taxon>Pseudomonadota</taxon>
        <taxon>Betaproteobacteria</taxon>
        <taxon>Burkholderiales</taxon>
        <taxon>Comamonadaceae</taxon>
        <taxon>Polaromonas</taxon>
    </lineage>
</organism>
<feature type="chain" id="PRO_1000003028" description="Phospho-N-acetylmuramoyl-pentapeptide-transferase">
    <location>
        <begin position="1"/>
        <end position="392"/>
    </location>
</feature>
<feature type="transmembrane region" description="Helical" evidence="1">
    <location>
        <begin position="28"/>
        <end position="48"/>
    </location>
</feature>
<feature type="transmembrane region" description="Helical" evidence="1">
    <location>
        <begin position="76"/>
        <end position="96"/>
    </location>
</feature>
<feature type="transmembrane region" description="Helical" evidence="1">
    <location>
        <begin position="100"/>
        <end position="120"/>
    </location>
</feature>
<feature type="transmembrane region" description="Helical" evidence="1">
    <location>
        <begin position="137"/>
        <end position="157"/>
    </location>
</feature>
<feature type="transmembrane region" description="Helical" evidence="1">
    <location>
        <begin position="193"/>
        <end position="213"/>
    </location>
</feature>
<feature type="transmembrane region" description="Helical" evidence="1">
    <location>
        <begin position="225"/>
        <end position="245"/>
    </location>
</feature>
<feature type="transmembrane region" description="Helical" evidence="1">
    <location>
        <begin position="262"/>
        <end position="282"/>
    </location>
</feature>
<feature type="transmembrane region" description="Helical" evidence="1">
    <location>
        <begin position="289"/>
        <end position="309"/>
    </location>
</feature>
<feature type="transmembrane region" description="Helical" evidence="1">
    <location>
        <begin position="314"/>
        <end position="334"/>
    </location>
</feature>
<feature type="transmembrane region" description="Helical" evidence="1">
    <location>
        <begin position="369"/>
        <end position="389"/>
    </location>
</feature>
<keyword id="KW-0131">Cell cycle</keyword>
<keyword id="KW-0132">Cell division</keyword>
<keyword id="KW-0997">Cell inner membrane</keyword>
<keyword id="KW-1003">Cell membrane</keyword>
<keyword id="KW-0133">Cell shape</keyword>
<keyword id="KW-0961">Cell wall biogenesis/degradation</keyword>
<keyword id="KW-0460">Magnesium</keyword>
<keyword id="KW-0472">Membrane</keyword>
<keyword id="KW-0479">Metal-binding</keyword>
<keyword id="KW-0573">Peptidoglycan synthesis</keyword>
<keyword id="KW-1185">Reference proteome</keyword>
<keyword id="KW-0808">Transferase</keyword>
<keyword id="KW-0812">Transmembrane</keyword>
<keyword id="KW-1133">Transmembrane helix</keyword>
<evidence type="ECO:0000255" key="1">
    <source>
        <dbReference type="HAMAP-Rule" id="MF_00038"/>
    </source>
</evidence>
<protein>
    <recommendedName>
        <fullName evidence="1">Phospho-N-acetylmuramoyl-pentapeptide-transferase</fullName>
        <ecNumber evidence="1">2.7.8.13</ecNumber>
    </recommendedName>
    <alternativeName>
        <fullName evidence="1">UDP-MurNAc-pentapeptide phosphotransferase</fullName>
    </alternativeName>
</protein>
<proteinExistence type="inferred from homology"/>
<comment type="function">
    <text evidence="1">Catalyzes the initial step of the lipid cycle reactions in the biosynthesis of the cell wall peptidoglycan: transfers peptidoglycan precursor phospho-MurNAc-pentapeptide from UDP-MurNAc-pentapeptide onto the lipid carrier undecaprenyl phosphate, yielding undecaprenyl-pyrophosphoryl-MurNAc-pentapeptide, known as lipid I.</text>
</comment>
<comment type="catalytic activity">
    <reaction evidence="1">
        <text>UDP-N-acetyl-alpha-D-muramoyl-L-alanyl-gamma-D-glutamyl-meso-2,6-diaminopimeloyl-D-alanyl-D-alanine + di-trans,octa-cis-undecaprenyl phosphate = di-trans,octa-cis-undecaprenyl diphospho-N-acetyl-alpha-D-muramoyl-L-alanyl-D-glutamyl-meso-2,6-diaminopimeloyl-D-alanyl-D-alanine + UMP</text>
        <dbReference type="Rhea" id="RHEA:28386"/>
        <dbReference type="ChEBI" id="CHEBI:57865"/>
        <dbReference type="ChEBI" id="CHEBI:60392"/>
        <dbReference type="ChEBI" id="CHEBI:61386"/>
        <dbReference type="ChEBI" id="CHEBI:61387"/>
        <dbReference type="EC" id="2.7.8.13"/>
    </reaction>
</comment>
<comment type="cofactor">
    <cofactor evidence="1">
        <name>Mg(2+)</name>
        <dbReference type="ChEBI" id="CHEBI:18420"/>
    </cofactor>
</comment>
<comment type="pathway">
    <text evidence="1">Cell wall biogenesis; peptidoglycan biosynthesis.</text>
</comment>
<comment type="subcellular location">
    <subcellularLocation>
        <location evidence="1">Cell inner membrane</location>
        <topology evidence="1">Multi-pass membrane protein</topology>
    </subcellularLocation>
</comment>
<comment type="similarity">
    <text evidence="1">Belongs to the glycosyltransferase 4 family. MraY subfamily.</text>
</comment>
<dbReference type="EC" id="2.7.8.13" evidence="1"/>
<dbReference type="EMBL" id="CP000529">
    <property type="protein sequence ID" value="ABM38717.1"/>
    <property type="molecule type" value="Genomic_DNA"/>
</dbReference>
<dbReference type="RefSeq" id="WP_011802788.1">
    <property type="nucleotide sequence ID" value="NC_008781.1"/>
</dbReference>
<dbReference type="SMR" id="A1VST9"/>
<dbReference type="STRING" id="365044.Pnap_3420"/>
<dbReference type="KEGG" id="pna:Pnap_3420"/>
<dbReference type="eggNOG" id="COG0472">
    <property type="taxonomic scope" value="Bacteria"/>
</dbReference>
<dbReference type="HOGENOM" id="CLU_023982_0_0_4"/>
<dbReference type="OrthoDB" id="9805475at2"/>
<dbReference type="UniPathway" id="UPA00219"/>
<dbReference type="Proteomes" id="UP000000644">
    <property type="component" value="Chromosome"/>
</dbReference>
<dbReference type="GO" id="GO:0005886">
    <property type="term" value="C:plasma membrane"/>
    <property type="evidence" value="ECO:0007669"/>
    <property type="project" value="UniProtKB-SubCell"/>
</dbReference>
<dbReference type="GO" id="GO:0046872">
    <property type="term" value="F:metal ion binding"/>
    <property type="evidence" value="ECO:0007669"/>
    <property type="project" value="UniProtKB-KW"/>
</dbReference>
<dbReference type="GO" id="GO:0008963">
    <property type="term" value="F:phospho-N-acetylmuramoyl-pentapeptide-transferase activity"/>
    <property type="evidence" value="ECO:0007669"/>
    <property type="project" value="UniProtKB-UniRule"/>
</dbReference>
<dbReference type="GO" id="GO:0051992">
    <property type="term" value="F:UDP-N-acetylmuramoyl-L-alanyl-D-glutamyl-meso-2,6-diaminopimelyl-D-alanyl-D-alanine:undecaprenyl-phosphate transferase activity"/>
    <property type="evidence" value="ECO:0007669"/>
    <property type="project" value="RHEA"/>
</dbReference>
<dbReference type="GO" id="GO:0051301">
    <property type="term" value="P:cell division"/>
    <property type="evidence" value="ECO:0007669"/>
    <property type="project" value="UniProtKB-KW"/>
</dbReference>
<dbReference type="GO" id="GO:0071555">
    <property type="term" value="P:cell wall organization"/>
    <property type="evidence" value="ECO:0007669"/>
    <property type="project" value="UniProtKB-KW"/>
</dbReference>
<dbReference type="GO" id="GO:0009252">
    <property type="term" value="P:peptidoglycan biosynthetic process"/>
    <property type="evidence" value="ECO:0007669"/>
    <property type="project" value="UniProtKB-UniRule"/>
</dbReference>
<dbReference type="GO" id="GO:0008360">
    <property type="term" value="P:regulation of cell shape"/>
    <property type="evidence" value="ECO:0007669"/>
    <property type="project" value="UniProtKB-KW"/>
</dbReference>
<dbReference type="CDD" id="cd06852">
    <property type="entry name" value="GT_MraY"/>
    <property type="match status" value="1"/>
</dbReference>
<dbReference type="HAMAP" id="MF_00038">
    <property type="entry name" value="MraY"/>
    <property type="match status" value="1"/>
</dbReference>
<dbReference type="InterPro" id="IPR000715">
    <property type="entry name" value="Glycosyl_transferase_4"/>
</dbReference>
<dbReference type="InterPro" id="IPR003524">
    <property type="entry name" value="PNAcMuramoyl-5peptid_Trfase"/>
</dbReference>
<dbReference type="InterPro" id="IPR018480">
    <property type="entry name" value="PNAcMuramoyl-5peptid_Trfase_CS"/>
</dbReference>
<dbReference type="NCBIfam" id="TIGR00445">
    <property type="entry name" value="mraY"/>
    <property type="match status" value="1"/>
</dbReference>
<dbReference type="PANTHER" id="PTHR22926">
    <property type="entry name" value="PHOSPHO-N-ACETYLMURAMOYL-PENTAPEPTIDE-TRANSFERASE"/>
    <property type="match status" value="1"/>
</dbReference>
<dbReference type="PANTHER" id="PTHR22926:SF5">
    <property type="entry name" value="PHOSPHO-N-ACETYLMURAMOYL-PENTAPEPTIDE-TRANSFERASE HOMOLOG"/>
    <property type="match status" value="1"/>
</dbReference>
<dbReference type="Pfam" id="PF00953">
    <property type="entry name" value="Glycos_transf_4"/>
    <property type="match status" value="1"/>
</dbReference>
<dbReference type="Pfam" id="PF10555">
    <property type="entry name" value="MraY_sig1"/>
    <property type="match status" value="1"/>
</dbReference>
<dbReference type="PROSITE" id="PS01347">
    <property type="entry name" value="MRAY_1"/>
    <property type="match status" value="1"/>
</dbReference>
<dbReference type="PROSITE" id="PS01348">
    <property type="entry name" value="MRAY_2"/>
    <property type="match status" value="1"/>
</dbReference>
<accession>A1VST9</accession>
<sequence length="392" mass="43343">MLLSLAQWLQTISPELGFLRVFQYLTFRALMAAMTALLIGLLAGPFVIRRLISLKIGQPIREYAMQTHLSKSGTPTMGGVLILLAIGISTLLWFDLSNRFVWIVLLVTLGFGAIGWVDDWRKVVLKDPEGMRSREKYLWQSVVGLIAALYLVFSISESSNLRVLELFMNWVRSGLDVNLPPKAGLLVPFMKEISYPLGVFGFVILTYLVIVGSSNAVNLTDGLDGLAIMPVVMVGSSLGVFAYVTGSSVYSKYLLFPHIPGSGELLIFCAAMAGSGLAFLWFNTHPAQVFMGDVGALALGAALGTIAVIVRQEIVLAIMGGIFVVEALSVMLQVTWFKYTKRRYGQGRRLFQMAPLHHHFEKCGWKETQVVVRFWIITMLLCLVGLSTLKLR</sequence>
<reference key="1">
    <citation type="journal article" date="2009" name="Environ. Microbiol.">
        <title>The genome of Polaromonas naphthalenivorans strain CJ2, isolated from coal tar-contaminated sediment, reveals physiological and metabolic versatility and evolution through extensive horizontal gene transfer.</title>
        <authorList>
            <person name="Yagi J.M."/>
            <person name="Sims D."/>
            <person name="Brettin T."/>
            <person name="Bruce D."/>
            <person name="Madsen E.L."/>
        </authorList>
    </citation>
    <scope>NUCLEOTIDE SEQUENCE [LARGE SCALE GENOMIC DNA]</scope>
    <source>
        <strain>CJ2</strain>
    </source>
</reference>